<keyword id="KW-0963">Cytoplasm</keyword>
<keyword id="KW-0448">Lipopolysaccharide biosynthesis</keyword>
<keyword id="KW-1185">Reference proteome</keyword>
<keyword id="KW-0808">Transferase</keyword>
<evidence type="ECO:0000255" key="1">
    <source>
        <dbReference type="HAMAP-Rule" id="MF_00056"/>
    </source>
</evidence>
<organism>
    <name type="scientific">Escherichia coli O157:H7</name>
    <dbReference type="NCBI Taxonomy" id="83334"/>
    <lineage>
        <taxon>Bacteria</taxon>
        <taxon>Pseudomonadati</taxon>
        <taxon>Pseudomonadota</taxon>
        <taxon>Gammaproteobacteria</taxon>
        <taxon>Enterobacterales</taxon>
        <taxon>Enterobacteriaceae</taxon>
        <taxon>Escherichia</taxon>
    </lineage>
</organism>
<reference key="1">
    <citation type="journal article" date="2001" name="Nature">
        <title>Genome sequence of enterohaemorrhagic Escherichia coli O157:H7.</title>
        <authorList>
            <person name="Perna N.T."/>
            <person name="Plunkett G. III"/>
            <person name="Burland V."/>
            <person name="Mau B."/>
            <person name="Glasner J.D."/>
            <person name="Rose D.J."/>
            <person name="Mayhew G.F."/>
            <person name="Evans P.S."/>
            <person name="Gregor J."/>
            <person name="Kirkpatrick H.A."/>
            <person name="Posfai G."/>
            <person name="Hackett J."/>
            <person name="Klink S."/>
            <person name="Boutin A."/>
            <person name="Shao Y."/>
            <person name="Miller L."/>
            <person name="Grotbeck E.J."/>
            <person name="Davis N.W."/>
            <person name="Lim A."/>
            <person name="Dimalanta E.T."/>
            <person name="Potamousis K."/>
            <person name="Apodaca J."/>
            <person name="Anantharaman T.S."/>
            <person name="Lin J."/>
            <person name="Yen G."/>
            <person name="Schwartz D.C."/>
            <person name="Welch R.A."/>
            <person name="Blattner F.R."/>
        </authorList>
    </citation>
    <scope>NUCLEOTIDE SEQUENCE [LARGE SCALE GENOMIC DNA]</scope>
    <source>
        <strain>O157:H7 / EDL933 / ATCC 700927 / EHEC</strain>
    </source>
</reference>
<reference key="2">
    <citation type="journal article" date="2001" name="DNA Res.">
        <title>Complete genome sequence of enterohemorrhagic Escherichia coli O157:H7 and genomic comparison with a laboratory strain K-12.</title>
        <authorList>
            <person name="Hayashi T."/>
            <person name="Makino K."/>
            <person name="Ohnishi M."/>
            <person name="Kurokawa K."/>
            <person name="Ishii K."/>
            <person name="Yokoyama K."/>
            <person name="Han C.-G."/>
            <person name="Ohtsubo E."/>
            <person name="Nakayama K."/>
            <person name="Murata T."/>
            <person name="Tanaka M."/>
            <person name="Tobe T."/>
            <person name="Iida T."/>
            <person name="Takami H."/>
            <person name="Honda T."/>
            <person name="Sasakawa C."/>
            <person name="Ogasawara N."/>
            <person name="Yasunaga T."/>
            <person name="Kuhara S."/>
            <person name="Shiba T."/>
            <person name="Hattori M."/>
            <person name="Shinagawa H."/>
        </authorList>
    </citation>
    <scope>NUCLEOTIDE SEQUENCE [LARGE SCALE GENOMIC DNA]</scope>
    <source>
        <strain>O157:H7 / Sakai / RIMD 0509952 / EHEC</strain>
    </source>
</reference>
<comment type="catalytic activity">
    <reaction evidence="1">
        <text>D-arabinose 5-phosphate + phosphoenolpyruvate + H2O = 3-deoxy-alpha-D-manno-2-octulosonate-8-phosphate + phosphate</text>
        <dbReference type="Rhea" id="RHEA:14053"/>
        <dbReference type="ChEBI" id="CHEBI:15377"/>
        <dbReference type="ChEBI" id="CHEBI:43474"/>
        <dbReference type="ChEBI" id="CHEBI:57693"/>
        <dbReference type="ChEBI" id="CHEBI:58702"/>
        <dbReference type="ChEBI" id="CHEBI:85985"/>
        <dbReference type="EC" id="2.5.1.55"/>
    </reaction>
</comment>
<comment type="pathway">
    <text evidence="1">Carbohydrate biosynthesis; 3-deoxy-D-manno-octulosonate biosynthesis; 3-deoxy-D-manno-octulosonate from D-ribulose 5-phosphate: step 2/3.</text>
</comment>
<comment type="pathway">
    <text evidence="1">Bacterial outer membrane biogenesis; lipopolysaccharide biosynthesis.</text>
</comment>
<comment type="subcellular location">
    <subcellularLocation>
        <location evidence="1">Cytoplasm</location>
    </subcellularLocation>
</comment>
<comment type="similarity">
    <text evidence="1">Belongs to the KdsA family.</text>
</comment>
<name>KDSA_ECO57</name>
<accession>Q8XDE7</accession>
<dbReference type="EC" id="2.5.1.55" evidence="1"/>
<dbReference type="EMBL" id="AE005174">
    <property type="protein sequence ID" value="AAG56073.1"/>
    <property type="molecule type" value="Genomic_DNA"/>
</dbReference>
<dbReference type="EMBL" id="BA000007">
    <property type="protein sequence ID" value="BAB35143.1"/>
    <property type="molecule type" value="Genomic_DNA"/>
</dbReference>
<dbReference type="PIR" id="E85701">
    <property type="entry name" value="E85701"/>
</dbReference>
<dbReference type="PIR" id="H90843">
    <property type="entry name" value="H90843"/>
</dbReference>
<dbReference type="RefSeq" id="NP_309747.1">
    <property type="nucleotide sequence ID" value="NC_002695.1"/>
</dbReference>
<dbReference type="RefSeq" id="WP_000811067.1">
    <property type="nucleotide sequence ID" value="NZ_VOAI01000038.1"/>
</dbReference>
<dbReference type="SMR" id="Q8XDE7"/>
<dbReference type="STRING" id="155864.Z1986"/>
<dbReference type="GeneID" id="913141"/>
<dbReference type="KEGG" id="ece:Z1986"/>
<dbReference type="KEGG" id="ecs:ECs_1720"/>
<dbReference type="PATRIC" id="fig|386585.9.peg.1818"/>
<dbReference type="eggNOG" id="COG2877">
    <property type="taxonomic scope" value="Bacteria"/>
</dbReference>
<dbReference type="HOGENOM" id="CLU_036666_0_0_6"/>
<dbReference type="OMA" id="FGYHNLV"/>
<dbReference type="UniPathway" id="UPA00030"/>
<dbReference type="UniPathway" id="UPA00357">
    <property type="reaction ID" value="UER00474"/>
</dbReference>
<dbReference type="Proteomes" id="UP000000558">
    <property type="component" value="Chromosome"/>
</dbReference>
<dbReference type="Proteomes" id="UP000002519">
    <property type="component" value="Chromosome"/>
</dbReference>
<dbReference type="GO" id="GO:0005737">
    <property type="term" value="C:cytoplasm"/>
    <property type="evidence" value="ECO:0007669"/>
    <property type="project" value="UniProtKB-SubCell"/>
</dbReference>
<dbReference type="GO" id="GO:0008676">
    <property type="term" value="F:3-deoxy-8-phosphooctulonate synthase activity"/>
    <property type="evidence" value="ECO:0007669"/>
    <property type="project" value="UniProtKB-UniRule"/>
</dbReference>
<dbReference type="GO" id="GO:0019294">
    <property type="term" value="P:keto-3-deoxy-D-manno-octulosonic acid biosynthetic process"/>
    <property type="evidence" value="ECO:0007669"/>
    <property type="project" value="UniProtKB-UniRule"/>
</dbReference>
<dbReference type="FunFam" id="3.20.20.70:FF:000058">
    <property type="entry name" value="2-dehydro-3-deoxyphosphooctonate aldolase"/>
    <property type="match status" value="1"/>
</dbReference>
<dbReference type="Gene3D" id="3.20.20.70">
    <property type="entry name" value="Aldolase class I"/>
    <property type="match status" value="1"/>
</dbReference>
<dbReference type="HAMAP" id="MF_00056">
    <property type="entry name" value="KDO8P_synth"/>
    <property type="match status" value="1"/>
</dbReference>
<dbReference type="InterPro" id="IPR013785">
    <property type="entry name" value="Aldolase_TIM"/>
</dbReference>
<dbReference type="InterPro" id="IPR006218">
    <property type="entry name" value="DAHP1/KDSA"/>
</dbReference>
<dbReference type="InterPro" id="IPR006269">
    <property type="entry name" value="KDO8P_synthase"/>
</dbReference>
<dbReference type="NCBIfam" id="TIGR01362">
    <property type="entry name" value="KDO8P_synth"/>
    <property type="match status" value="1"/>
</dbReference>
<dbReference type="NCBIfam" id="NF003543">
    <property type="entry name" value="PRK05198.1"/>
    <property type="match status" value="1"/>
</dbReference>
<dbReference type="NCBIfam" id="NF009109">
    <property type="entry name" value="PRK12457.1"/>
    <property type="match status" value="1"/>
</dbReference>
<dbReference type="PANTHER" id="PTHR21057">
    <property type="entry name" value="PHOSPHO-2-DEHYDRO-3-DEOXYHEPTONATE ALDOLASE"/>
    <property type="match status" value="1"/>
</dbReference>
<dbReference type="Pfam" id="PF00793">
    <property type="entry name" value="DAHP_synth_1"/>
    <property type="match status" value="1"/>
</dbReference>
<dbReference type="SUPFAM" id="SSF51569">
    <property type="entry name" value="Aldolase"/>
    <property type="match status" value="1"/>
</dbReference>
<protein>
    <recommendedName>
        <fullName evidence="1">2-dehydro-3-deoxyphosphooctonate aldolase</fullName>
        <ecNumber evidence="1">2.5.1.55</ecNumber>
    </recommendedName>
    <alternativeName>
        <fullName evidence="1">3-deoxy-D-manno-octulosonic acid 8-phosphate synthase</fullName>
    </alternativeName>
    <alternativeName>
        <fullName evidence="1">KDO-8-phosphate synthase</fullName>
        <shortName evidence="1">KDO 8-P synthase</shortName>
        <shortName evidence="1">KDOPS</shortName>
    </alternativeName>
    <alternativeName>
        <fullName evidence="1">Phospho-2-dehydro-3-deoxyoctonate aldolase</fullName>
    </alternativeName>
</protein>
<proteinExistence type="inferred from homology"/>
<gene>
    <name evidence="1" type="primary">kdsA</name>
    <name type="ordered locus">Z1986</name>
    <name type="ordered locus">ECs1720</name>
</gene>
<sequence>MKQKVVSIGDINVANDLPFVLFGGMNVLESRDLAMRICEHYVTVTQKLGIPYVFKASFDKANRSSIHSYRGPGLEEGMKIFQELKQTFGVKIITDVHEPSQAQPVADVVDVIQLPAFLARQTDLVEAMAKTGAVINVKKPQFVSPGQMGNIVDKFKEGGNEKVILCDRGANFGYDNLVVDMLGFSIMKKVSGNSPVIFDVTHALQCRDPFGAASGGRRAQVAELARAGMAVGLAGLFIEAHPDPEHAKCDGPSALPLAKLEPFLRQMKAIDDLVKGFEELDTSK</sequence>
<feature type="chain" id="PRO_0000187126" description="2-dehydro-3-deoxyphosphooctonate aldolase">
    <location>
        <begin position="1"/>
        <end position="284"/>
    </location>
</feature>